<comment type="function">
    <text evidence="2">Accepts the ubiquitin-like proteins SUMO1, SUMO2 and SUMO3 from the UBLE1A-UBLE1B E1 complex and catalyzes their covalent attachment to other proteins with the help of an E3 ligase such as RANBP2, CBX4 and ZNF451 (By similarity). Can catalyze the formation of poly-SUMO chains (By similarity). Essential for nuclear architecture and chromosome segregation (By similarity). Necessary for sumoylation of FOXL2 and KAT5 (By similarity). Sumoylates p53/TP53 at 'Lys-386' (By similarity). Mediates sumoylation of ERCC6 which is essential for its transcription-coupled nucleotide excision repair activity (By similarity).</text>
</comment>
<comment type="pathway">
    <text>Protein modification; protein sumoylation.</text>
</comment>
<comment type="subunit">
    <text evidence="2 3 7 8">Forms a complex with SENP6 and UBE2I in response to UV irradiation (By similarity). Forms a tight complex with RANGAP1 and RANBP2 (By similarity). Identified in a complex with SUMO2 and UBE2I, where one ZNF451 interacts with one UBE2I and two SUMO2 chains, one bound to the UBE2I active site and the other to another region of the same UBE2I molecule (By similarity). Interacts with SETX (By similarity). Interacts with HIPK1 and HIPK2 (By similarity). Interacts with PPM1J (By similarity). Interacts with RASD2 (PubMed:19498170). Interacts with TCF3 (PubMed:9013644). Interacts with NR2C1; the interaction promotes its sumoylation (By similarity). Interacts with SIAH1 (By similarity). Interacts with PARP (By similarity). Interacts with various transcription factors such as TFAP2A, TFAP2B, and TFAP2C (By similarity). Interacts with AR (By similarity). Interacts with ETS1 (By similarity). Interacts with SOX4 (By similarity). Interacts with RWDD3; the interaction enhances the sumoylation of a number of proteins such as HIF1A and I-kappa-B (By similarity). Interacts with FOXL2 (By similarity). Interacts with DNM1l (via its GTPase and B domains); the interaction promotes sumoylation of DNM1L, mainly in its B domain (By similarity). Interacts with NFATC2IP; this inhibits formation of poly-SUMO chains (By similarity). Interacts with FHIT (By similarity). Interacts with PRKRA and p53/TP53 (By similarity). Interacts with UHRF2 (By similarity). Interacts with NR3C1 and this interaction is enhanced in the presence of RWDD3 (By similarity). Interacts with MTA1 (By similarity). Interacts with ZNF451 (By similarity). Interacts with CPEB3 (By similarity). Interacts with SUMO1, SUMO2, and SUMO3 (By similarity). Interacts with IPO13 (By similarity). Interacts with DNMT1 (By similarity).</text>
</comment>
<comment type="interaction">
    <interactant intactId="EBI-7974723">
        <id>P63281</id>
    </interactant>
    <interactant intactId="EBI-7809795">
        <id>P42260</id>
        <label>Grik2</label>
    </interactant>
    <organismsDiffer>false</organismsDiffer>
    <experiments>3</experiments>
</comment>
<comment type="subcellular location">
    <subcellularLocation>
        <location evidence="8">Nucleus</location>
    </subcellularLocation>
    <subcellularLocation>
        <location evidence="8">Cytoplasm</location>
    </subcellularLocation>
    <text evidence="2 3">Mainly nuclear (By similarity). In spermatocytes, localizes in synaptonemal complexes (By similarity). Recruited by BCL11A into the nuclear body (By similarity).</text>
</comment>
<comment type="tissue specificity">
    <text evidence="6">Broadly expressed, with highest levels in spleen and lung (at protein level).</text>
</comment>
<comment type="PTM">
    <text evidence="2">Phosphorylation at Ser-71 significantly enhances SUMOylation activity.</text>
</comment>
<comment type="similarity">
    <text evidence="4">Belongs to the ubiquitin-conjugating enzyme family.</text>
</comment>
<gene>
    <name type="primary">Ube2i</name>
    <name type="synonym">Ubce9</name>
</gene>
<organism>
    <name type="scientific">Rattus norvegicus</name>
    <name type="common">Rat</name>
    <dbReference type="NCBI Taxonomy" id="10116"/>
    <lineage>
        <taxon>Eukaryota</taxon>
        <taxon>Metazoa</taxon>
        <taxon>Chordata</taxon>
        <taxon>Craniata</taxon>
        <taxon>Vertebrata</taxon>
        <taxon>Euteleostomi</taxon>
        <taxon>Mammalia</taxon>
        <taxon>Eutheria</taxon>
        <taxon>Euarchontoglires</taxon>
        <taxon>Glires</taxon>
        <taxon>Rodentia</taxon>
        <taxon>Myomorpha</taxon>
        <taxon>Muroidea</taxon>
        <taxon>Muridae</taxon>
        <taxon>Murinae</taxon>
        <taxon>Rattus</taxon>
    </lineage>
</organism>
<feature type="initiator methionine" description="Removed" evidence="2">
    <location>
        <position position="1"/>
    </location>
</feature>
<feature type="chain" id="PRO_0000082457" description="SUMO-conjugating enzyme UBC9">
    <location>
        <begin position="2"/>
        <end position="158"/>
    </location>
</feature>
<feature type="domain" description="UBC core" evidence="4">
    <location>
        <begin position="4"/>
        <end position="157"/>
    </location>
</feature>
<feature type="region of interest" description="Interaction with SUMO1" evidence="1">
    <location>
        <begin position="13"/>
        <end position="18"/>
    </location>
</feature>
<feature type="active site" description="Glycyl thioester intermediate" evidence="4 5">
    <location>
        <position position="93"/>
    </location>
</feature>
<feature type="site" description="Interaction with RANBP2" evidence="1">
    <location>
        <position position="4"/>
    </location>
</feature>
<feature type="site" description="Interaction with RANBP2" evidence="1">
    <location>
        <position position="25"/>
    </location>
</feature>
<feature type="site" description="Interaction with RANBP2" evidence="1">
    <location>
        <position position="57"/>
    </location>
</feature>
<feature type="site" description="Substrate binding" evidence="1">
    <location>
        <begin position="100"/>
        <end position="101"/>
    </location>
</feature>
<feature type="modified residue" description="N-acetylserine" evidence="2">
    <location>
        <position position="2"/>
    </location>
</feature>
<feature type="modified residue" description="N6-acetyllysine" evidence="2">
    <location>
        <position position="65"/>
    </location>
</feature>
<feature type="modified residue" description="Phosphoserine; by CDK1" evidence="2">
    <location>
        <position position="71"/>
    </location>
</feature>
<feature type="cross-link" description="Glycyl lysine isopeptide (Lys-Gly) (interchain with G-Cter in SUMO2); alternate" evidence="2">
    <location>
        <position position="18"/>
    </location>
</feature>
<feature type="cross-link" description="Glycyl lysine isopeptide (Lys-Gly) (interchain with G-Cter in ubiquitin); alternate" evidence="2">
    <location>
        <position position="18"/>
    </location>
</feature>
<feature type="cross-link" description="Glycyl lysine isopeptide (Lys-Gly) (interchain with G-Cter in SUMO2)" evidence="2">
    <location>
        <position position="48"/>
    </location>
</feature>
<feature type="cross-link" description="Glycyl lysine isopeptide (Lys-Gly) (interchain with G-Cter in SUMO1); alternate" evidence="2">
    <location>
        <position position="49"/>
    </location>
</feature>
<feature type="cross-link" description="Glycyl lysine isopeptide (Lys-Gly) (interchain with G-Cter in SUMO2); alternate" evidence="2">
    <location>
        <position position="49"/>
    </location>
</feature>
<feature type="cross-link" description="Glycyl lysine isopeptide (Lys-Gly) (interchain with G-Cter in SUMO2)" evidence="2">
    <location>
        <position position="101"/>
    </location>
</feature>
<sequence>MSGIALSRLAQERKAWRKDHPFGFVAVPTKNPDGTMNLMNWECAIPGKKGTPWEGGLFKLRMLFKDDYPSSPPKCKFEPPLFHPNVYPSGTVCLSILEEDKDWRPAITIKQILLGIQELLNEPNIQDPAQAEAYTIYCQNRVEYEKRVRAQAKKFAPS</sequence>
<accession>P63281</accession>
<accession>P50550</accession>
<accession>Q15698</accession>
<accession>Q86VB3</accession>
<keyword id="KW-0007">Acetylation</keyword>
<keyword id="KW-0067">ATP-binding</keyword>
<keyword id="KW-0131">Cell cycle</keyword>
<keyword id="KW-0132">Cell division</keyword>
<keyword id="KW-0159">Chromosome partition</keyword>
<keyword id="KW-0963">Cytoplasm</keyword>
<keyword id="KW-1017">Isopeptide bond</keyword>
<keyword id="KW-0498">Mitosis</keyword>
<keyword id="KW-0547">Nucleotide-binding</keyword>
<keyword id="KW-0539">Nucleus</keyword>
<keyword id="KW-0597">Phosphoprotein</keyword>
<keyword id="KW-1185">Reference proteome</keyword>
<keyword id="KW-0808">Transferase</keyword>
<keyword id="KW-0832">Ubl conjugation</keyword>
<keyword id="KW-0833">Ubl conjugation pathway</keyword>
<evidence type="ECO:0000250" key="1"/>
<evidence type="ECO:0000250" key="2">
    <source>
        <dbReference type="UniProtKB" id="P63279"/>
    </source>
</evidence>
<evidence type="ECO:0000250" key="3">
    <source>
        <dbReference type="UniProtKB" id="P63280"/>
    </source>
</evidence>
<evidence type="ECO:0000255" key="4">
    <source>
        <dbReference type="PROSITE-ProRule" id="PRU00388"/>
    </source>
</evidence>
<evidence type="ECO:0000255" key="5">
    <source>
        <dbReference type="PROSITE-ProRule" id="PRU10133"/>
    </source>
</evidence>
<evidence type="ECO:0000269" key="6">
    <source>
    </source>
</evidence>
<evidence type="ECO:0000269" key="7">
    <source>
    </source>
</evidence>
<evidence type="ECO:0000269" key="8">
    <source>
    </source>
</evidence>
<evidence type="ECO:0000303" key="9">
    <source>
    </source>
</evidence>
<reference key="1">
    <citation type="journal article" date="1997" name="J. Biol. Chem.">
        <title>Degradation of E2A proteins through a ubiquitin-conjugating enzyme, UbcE2A.</title>
        <authorList>
            <person name="Kho C.-J."/>
            <person name="Huggins G.S."/>
            <person name="Endege W.O."/>
            <person name="Hsieh C.-M."/>
            <person name="Lee M.-E."/>
            <person name="Haber E."/>
        </authorList>
    </citation>
    <scope>NUCLEOTIDE SEQUENCE [MRNA]</scope>
    <scope>INTERACTION WITH TCF3</scope>
    <scope>SUBCELLULAR LOCATION</scope>
    <source>
        <strain>CD Charles River</strain>
        <tissue>Aorta</tissue>
    </source>
</reference>
<reference key="2">
    <citation type="journal article" date="2004" name="Genome Res.">
        <title>The status, quality, and expansion of the NIH full-length cDNA project: the Mammalian Gene Collection (MGC).</title>
        <authorList>
            <consortium name="The MGC Project Team"/>
        </authorList>
    </citation>
    <scope>NUCLEOTIDE SEQUENCE [LARGE SCALE MRNA]</scope>
    <source>
        <tissue>Ovary</tissue>
    </source>
</reference>
<reference key="3">
    <citation type="journal article" date="2003" name="Acta Biochim. Pol.">
        <title>Expression level of Ubc9 protein in rat tissues.</title>
        <authorList>
            <person name="Golebiowski F."/>
            <person name="Szulc A."/>
            <person name="Sakowicz M."/>
            <person name="Szutowicz A."/>
            <person name="Pawelczyk T."/>
        </authorList>
    </citation>
    <scope>TISSUE SPECIFICITY</scope>
</reference>
<reference key="4">
    <citation type="journal article" date="2009" name="Science">
        <title>Rhes, a striatal specific protein, mediates mutant-huntingtin cytotoxicity.</title>
        <authorList>
            <person name="Subramaniam S."/>
            <person name="Sixt K.M."/>
            <person name="Barrow R."/>
            <person name="Snyder S.H."/>
        </authorList>
    </citation>
    <scope>INTERACTION WITH RASD2</scope>
</reference>
<name>UBC9_RAT</name>
<protein>
    <recommendedName>
        <fullName>SUMO-conjugating enzyme UBC9</fullName>
        <ecNumber>2.3.2.-</ecNumber>
    </recommendedName>
    <alternativeName>
        <fullName>RING-type E3 SUMO transferase UBC9</fullName>
    </alternativeName>
    <alternativeName>
        <fullName>SUMO-protein ligase</fullName>
    </alternativeName>
    <alternativeName>
        <fullName>Ubiquitin carrier protein 9</fullName>
    </alternativeName>
    <alternativeName>
        <fullName>Ubiquitin carrier protein I</fullName>
    </alternativeName>
    <alternativeName>
        <fullName>Ubiquitin-conjugating enzyme E2 I</fullName>
    </alternativeName>
    <alternativeName>
        <fullName evidence="9">Ubiquitin-conjugating enzyme UbcE2A</fullName>
    </alternativeName>
    <alternativeName>
        <fullName>Ubiquitin-protein ligase I</fullName>
    </alternativeName>
</protein>
<dbReference type="EC" id="2.3.2.-"/>
<dbReference type="EMBL" id="U54632">
    <property type="protein sequence ID" value="AAC98704.1"/>
    <property type="molecule type" value="mRNA"/>
</dbReference>
<dbReference type="EMBL" id="BC086324">
    <property type="protein sequence ID" value="AAH86324.1"/>
    <property type="molecule type" value="mRNA"/>
</dbReference>
<dbReference type="EMBL" id="BC086592">
    <property type="protein sequence ID" value="AAH86592.1"/>
    <property type="molecule type" value="mRNA"/>
</dbReference>
<dbReference type="RefSeq" id="NP_001415902.1">
    <property type="nucleotide sequence ID" value="NM_001428973.1"/>
</dbReference>
<dbReference type="RefSeq" id="NP_001415903.1">
    <property type="nucleotide sequence ID" value="NM_001428974.1"/>
</dbReference>
<dbReference type="RefSeq" id="NP_001415904.1">
    <property type="nucleotide sequence ID" value="NM_001428975.1"/>
</dbReference>
<dbReference type="RefSeq" id="NP_001415905.1">
    <property type="nucleotide sequence ID" value="NM_001428976.1"/>
</dbReference>
<dbReference type="RefSeq" id="NP_037182.1">
    <property type="nucleotide sequence ID" value="NM_013050.3"/>
</dbReference>
<dbReference type="RefSeq" id="XP_006245980.2">
    <property type="nucleotide sequence ID" value="XM_006245918.3"/>
</dbReference>
<dbReference type="RefSeq" id="XP_006245981.1">
    <property type="nucleotide sequence ID" value="XM_006245919.3"/>
</dbReference>
<dbReference type="RefSeq" id="XP_006245982.1">
    <property type="nucleotide sequence ID" value="XM_006245920.3"/>
</dbReference>
<dbReference type="RefSeq" id="XP_008765771.2">
    <property type="nucleotide sequence ID" value="XM_008767549.2"/>
</dbReference>
<dbReference type="RefSeq" id="XP_017452533.1">
    <property type="nucleotide sequence ID" value="XM_017597044.1"/>
</dbReference>
<dbReference type="BMRB" id="P63281"/>
<dbReference type="SMR" id="P63281"/>
<dbReference type="BioGRID" id="247604">
    <property type="interactions" value="13"/>
</dbReference>
<dbReference type="DIP" id="DIP-47657N"/>
<dbReference type="FunCoup" id="P63281">
    <property type="interactions" value="3902"/>
</dbReference>
<dbReference type="IntAct" id="P63281">
    <property type="interactions" value="2"/>
</dbReference>
<dbReference type="MINT" id="P63281"/>
<dbReference type="STRING" id="10116.ENSRNOP00000024406"/>
<dbReference type="iPTMnet" id="P63281"/>
<dbReference type="PhosphoSitePlus" id="P63281"/>
<dbReference type="jPOST" id="P63281"/>
<dbReference type="PaxDb" id="10116-ENSRNOP00000024406"/>
<dbReference type="Ensembl" id="ENSRNOT00000104064.1">
    <property type="protein sequence ID" value="ENSRNOP00000085922.1"/>
    <property type="gene ID" value="ENSRNOG00000066579.1"/>
</dbReference>
<dbReference type="GeneID" id="25573"/>
<dbReference type="KEGG" id="rno:25573"/>
<dbReference type="UCSC" id="RGD:3926">
    <property type="organism name" value="rat"/>
</dbReference>
<dbReference type="AGR" id="RGD:3926"/>
<dbReference type="CTD" id="7329"/>
<dbReference type="RGD" id="3926">
    <property type="gene designation" value="Ube2i"/>
</dbReference>
<dbReference type="VEuPathDB" id="HostDB:ENSRNOG00000017907"/>
<dbReference type="eggNOG" id="KOG0424">
    <property type="taxonomic scope" value="Eukaryota"/>
</dbReference>
<dbReference type="GeneTree" id="ENSGT00550000075088"/>
<dbReference type="HOGENOM" id="CLU_030988_12_0_1"/>
<dbReference type="InParanoid" id="P63281"/>
<dbReference type="OrthoDB" id="31108at9989"/>
<dbReference type="PhylomeDB" id="P63281"/>
<dbReference type="TreeFam" id="TF101122"/>
<dbReference type="Reactome" id="R-RNO-196791">
    <property type="pathway name" value="Vitamin D (calciferol) metabolism"/>
</dbReference>
<dbReference type="Reactome" id="R-RNO-3065678">
    <property type="pathway name" value="SUMO is transferred from E1 to E2 (UBE2I, UBC9)"/>
</dbReference>
<dbReference type="Reactome" id="R-RNO-3108214">
    <property type="pathway name" value="SUMOylation of DNA damage response and repair proteins"/>
</dbReference>
<dbReference type="Reactome" id="R-RNO-3232118">
    <property type="pathway name" value="SUMOylation of transcription factors"/>
</dbReference>
<dbReference type="Reactome" id="R-RNO-3232142">
    <property type="pathway name" value="SUMOylation of ubiquitinylation proteins"/>
</dbReference>
<dbReference type="Reactome" id="R-RNO-3899300">
    <property type="pathway name" value="SUMOylation of transcription cofactors"/>
</dbReference>
<dbReference type="Reactome" id="R-RNO-4085377">
    <property type="pathway name" value="SUMOylation of SUMOylation proteins"/>
</dbReference>
<dbReference type="Reactome" id="R-RNO-4090294">
    <property type="pathway name" value="SUMOylation of intracellular receptors"/>
</dbReference>
<dbReference type="Reactome" id="R-RNO-4551638">
    <property type="pathway name" value="SUMOylation of chromatin organization proteins"/>
</dbReference>
<dbReference type="Reactome" id="R-RNO-4570464">
    <property type="pathway name" value="SUMOylation of RNA binding proteins"/>
</dbReference>
<dbReference type="Reactome" id="R-RNO-4615885">
    <property type="pathway name" value="SUMOylation of DNA replication proteins"/>
</dbReference>
<dbReference type="Reactome" id="R-RNO-4655427">
    <property type="pathway name" value="SUMOylation of DNA methylation proteins"/>
</dbReference>
<dbReference type="Reactome" id="R-RNO-4755510">
    <property type="pathway name" value="SUMOylation of immune response proteins"/>
</dbReference>
<dbReference type="Reactome" id="R-RNO-5693565">
    <property type="pathway name" value="Recruitment and ATM-mediated phosphorylation of repair and signaling proteins at DNA double strand breaks"/>
</dbReference>
<dbReference type="Reactome" id="R-RNO-5693607">
    <property type="pathway name" value="Processing of DNA double-strand break ends"/>
</dbReference>
<dbReference type="Reactome" id="R-RNO-5696395">
    <property type="pathway name" value="Formation of Incision Complex in GG-NER"/>
</dbReference>
<dbReference type="Reactome" id="R-RNO-8866904">
    <property type="pathway name" value="Negative regulation of activity of TFAP2 (AP-2) family transcription factors"/>
</dbReference>
<dbReference type="Reactome" id="R-RNO-9615933">
    <property type="pathway name" value="Postmitotic nuclear pore complex (NPC) reformation"/>
</dbReference>
<dbReference type="Reactome" id="R-RNO-9793242">
    <property type="pathway name" value="SUMOylation of nuclear envelope proteins"/>
</dbReference>
<dbReference type="Reactome" id="R-RNO-9856649">
    <property type="pathway name" value="Transcriptional and post-translational regulation of MITF-M expression and activity"/>
</dbReference>
<dbReference type="UniPathway" id="UPA00886"/>
<dbReference type="PRO" id="PR:P63281"/>
<dbReference type="Proteomes" id="UP000002494">
    <property type="component" value="Chromosome 10"/>
</dbReference>
<dbReference type="Bgee" id="ENSRNOG00000017907">
    <property type="expression patterns" value="Expressed in spleen and 19 other cell types or tissues"/>
</dbReference>
<dbReference type="GO" id="GO:0005737">
    <property type="term" value="C:cytoplasm"/>
    <property type="evidence" value="ECO:0000266"/>
    <property type="project" value="RGD"/>
</dbReference>
<dbReference type="GO" id="GO:0030425">
    <property type="term" value="C:dendrite"/>
    <property type="evidence" value="ECO:0000314"/>
    <property type="project" value="RGD"/>
</dbReference>
<dbReference type="GO" id="GO:0001650">
    <property type="term" value="C:fibrillar center"/>
    <property type="evidence" value="ECO:0000314"/>
    <property type="project" value="RGD"/>
</dbReference>
<dbReference type="GO" id="GO:0098978">
    <property type="term" value="C:glutamatergic synapse"/>
    <property type="evidence" value="ECO:0000266"/>
    <property type="project" value="RGD"/>
</dbReference>
<dbReference type="GO" id="GO:0016604">
    <property type="term" value="C:nuclear body"/>
    <property type="evidence" value="ECO:0000314"/>
    <property type="project" value="RGD"/>
</dbReference>
<dbReference type="GO" id="GO:0005635">
    <property type="term" value="C:nuclear envelope"/>
    <property type="evidence" value="ECO:0000314"/>
    <property type="project" value="RGD"/>
</dbReference>
<dbReference type="GO" id="GO:0005654">
    <property type="term" value="C:nucleoplasm"/>
    <property type="evidence" value="ECO:0000266"/>
    <property type="project" value="RGD"/>
</dbReference>
<dbReference type="GO" id="GO:0005634">
    <property type="term" value="C:nucleus"/>
    <property type="evidence" value="ECO:0000266"/>
    <property type="project" value="RGD"/>
</dbReference>
<dbReference type="GO" id="GO:0016605">
    <property type="term" value="C:PML body"/>
    <property type="evidence" value="ECO:0000266"/>
    <property type="project" value="RGD"/>
</dbReference>
<dbReference type="GO" id="GO:0099524">
    <property type="term" value="C:postsynaptic cytosol"/>
    <property type="evidence" value="ECO:0000266"/>
    <property type="project" value="RGD"/>
</dbReference>
<dbReference type="GO" id="GO:0099523">
    <property type="term" value="C:presynaptic cytosol"/>
    <property type="evidence" value="ECO:0000266"/>
    <property type="project" value="RGD"/>
</dbReference>
<dbReference type="GO" id="GO:0098685">
    <property type="term" value="C:Schaffer collateral - CA1 synapse"/>
    <property type="evidence" value="ECO:0000266"/>
    <property type="project" value="RGD"/>
</dbReference>
<dbReference type="GO" id="GO:0106068">
    <property type="term" value="C:SUMO ligase complex"/>
    <property type="evidence" value="ECO:0000266"/>
    <property type="project" value="RGD"/>
</dbReference>
<dbReference type="GO" id="GO:1990234">
    <property type="term" value="C:transferase complex"/>
    <property type="evidence" value="ECO:0000266"/>
    <property type="project" value="RGD"/>
</dbReference>
<dbReference type="GO" id="GO:0005524">
    <property type="term" value="F:ATP binding"/>
    <property type="evidence" value="ECO:0007669"/>
    <property type="project" value="UniProtKB-KW"/>
</dbReference>
<dbReference type="GO" id="GO:0043425">
    <property type="term" value="F:bHLH transcription factor binding"/>
    <property type="evidence" value="ECO:0000353"/>
    <property type="project" value="RGD"/>
</dbReference>
<dbReference type="GO" id="GO:0019899">
    <property type="term" value="F:enzyme binding"/>
    <property type="evidence" value="ECO:0000266"/>
    <property type="project" value="RGD"/>
</dbReference>
<dbReference type="GO" id="GO:0043398">
    <property type="term" value="F:HLH domain binding"/>
    <property type="evidence" value="ECO:0000266"/>
    <property type="project" value="RGD"/>
</dbReference>
<dbReference type="GO" id="GO:0035255">
    <property type="term" value="F:ionotropic glutamate receptor binding"/>
    <property type="evidence" value="ECO:0000353"/>
    <property type="project" value="RGD"/>
</dbReference>
<dbReference type="GO" id="GO:0071535">
    <property type="term" value="F:RING-like zinc finger domain binding"/>
    <property type="evidence" value="ECO:0000266"/>
    <property type="project" value="RGD"/>
</dbReference>
<dbReference type="GO" id="GO:0044388">
    <property type="term" value="F:small protein activating enzyme binding"/>
    <property type="evidence" value="ECO:0000266"/>
    <property type="project" value="RGD"/>
</dbReference>
<dbReference type="GO" id="GO:0061656">
    <property type="term" value="F:SUMO conjugating enzyme activity"/>
    <property type="evidence" value="ECO:0000266"/>
    <property type="project" value="RGD"/>
</dbReference>
<dbReference type="GO" id="GO:0019789">
    <property type="term" value="F:SUMO transferase activity"/>
    <property type="evidence" value="ECO:0000314"/>
    <property type="project" value="RGD"/>
</dbReference>
<dbReference type="GO" id="GO:0001221">
    <property type="term" value="F:transcription coregulator binding"/>
    <property type="evidence" value="ECO:0000266"/>
    <property type="project" value="RGD"/>
</dbReference>
<dbReference type="GO" id="GO:0004842">
    <property type="term" value="F:ubiquitin-protein transferase activity"/>
    <property type="evidence" value="ECO:0000314"/>
    <property type="project" value="RGD"/>
</dbReference>
<dbReference type="GO" id="GO:0051301">
    <property type="term" value="P:cell division"/>
    <property type="evidence" value="ECO:0007669"/>
    <property type="project" value="UniProtKB-KW"/>
</dbReference>
<dbReference type="GO" id="GO:0007059">
    <property type="term" value="P:chromosome segregation"/>
    <property type="evidence" value="ECO:0007669"/>
    <property type="project" value="UniProtKB-KW"/>
</dbReference>
<dbReference type="GO" id="GO:0050804">
    <property type="term" value="P:modulation of chemical synaptic transmission"/>
    <property type="evidence" value="ECO:0000266"/>
    <property type="project" value="RGD"/>
</dbReference>
<dbReference type="GO" id="GO:0045892">
    <property type="term" value="P:negative regulation of DNA-templated transcription"/>
    <property type="evidence" value="ECO:0000266"/>
    <property type="project" value="RGD"/>
</dbReference>
<dbReference type="GO" id="GO:0000122">
    <property type="term" value="P:negative regulation of transcription by RNA polymerase II"/>
    <property type="evidence" value="ECO:0000266"/>
    <property type="project" value="RGD"/>
</dbReference>
<dbReference type="GO" id="GO:0051168">
    <property type="term" value="P:nuclear export"/>
    <property type="evidence" value="ECO:0000266"/>
    <property type="project" value="RGD"/>
</dbReference>
<dbReference type="GO" id="GO:0043123">
    <property type="term" value="P:positive regulation of canonical NF-kappaB signal transduction"/>
    <property type="evidence" value="ECO:0000266"/>
    <property type="project" value="RGD"/>
</dbReference>
<dbReference type="GO" id="GO:0030335">
    <property type="term" value="P:positive regulation of cell migration"/>
    <property type="evidence" value="ECO:0000266"/>
    <property type="project" value="RGD"/>
</dbReference>
<dbReference type="GO" id="GO:0033145">
    <property type="term" value="P:positive regulation of intracellular steroid hormone receptor signaling pathway"/>
    <property type="evidence" value="ECO:0000314"/>
    <property type="project" value="RGD"/>
</dbReference>
<dbReference type="GO" id="GO:0043161">
    <property type="term" value="P:proteasome-mediated ubiquitin-dependent protein catabolic process"/>
    <property type="evidence" value="ECO:0000315"/>
    <property type="project" value="RGD"/>
</dbReference>
<dbReference type="GO" id="GO:0016925">
    <property type="term" value="P:protein sumoylation"/>
    <property type="evidence" value="ECO:0000314"/>
    <property type="project" value="RGD"/>
</dbReference>
<dbReference type="GO" id="GO:0006511">
    <property type="term" value="P:ubiquitin-dependent protein catabolic process"/>
    <property type="evidence" value="ECO:0000304"/>
    <property type="project" value="RGD"/>
</dbReference>
<dbReference type="CDD" id="cd23798">
    <property type="entry name" value="UBCc_UBE2I"/>
    <property type="match status" value="1"/>
</dbReference>
<dbReference type="FunFam" id="3.10.110.10:FF:000013">
    <property type="entry name" value="SUMO-conjugating enzyme UBC9"/>
    <property type="match status" value="1"/>
</dbReference>
<dbReference type="Gene3D" id="3.10.110.10">
    <property type="entry name" value="Ubiquitin Conjugating Enzyme"/>
    <property type="match status" value="1"/>
</dbReference>
<dbReference type="InterPro" id="IPR050113">
    <property type="entry name" value="Ub_conjugating_enzyme"/>
</dbReference>
<dbReference type="InterPro" id="IPR000608">
    <property type="entry name" value="UBQ-conjugat_E2_core"/>
</dbReference>
<dbReference type="InterPro" id="IPR023313">
    <property type="entry name" value="UBQ-conjugating_AS"/>
</dbReference>
<dbReference type="InterPro" id="IPR016135">
    <property type="entry name" value="UBQ-conjugating_enzyme/RWD"/>
</dbReference>
<dbReference type="PANTHER" id="PTHR24067">
    <property type="entry name" value="UBIQUITIN-CONJUGATING ENZYME E2"/>
    <property type="match status" value="1"/>
</dbReference>
<dbReference type="Pfam" id="PF00179">
    <property type="entry name" value="UQ_con"/>
    <property type="match status" value="1"/>
</dbReference>
<dbReference type="SMART" id="SM00212">
    <property type="entry name" value="UBCc"/>
    <property type="match status" value="1"/>
</dbReference>
<dbReference type="SUPFAM" id="SSF54495">
    <property type="entry name" value="UBC-like"/>
    <property type="match status" value="1"/>
</dbReference>
<dbReference type="PROSITE" id="PS00183">
    <property type="entry name" value="UBC_1"/>
    <property type="match status" value="1"/>
</dbReference>
<dbReference type="PROSITE" id="PS50127">
    <property type="entry name" value="UBC_2"/>
    <property type="match status" value="1"/>
</dbReference>
<proteinExistence type="evidence at protein level"/>